<reference key="1">
    <citation type="journal article" date="2007" name="Nat. Biotechnol.">
        <title>Complete genome sequence of the erythromycin-producing bacterium Saccharopolyspora erythraea NRRL23338.</title>
        <authorList>
            <person name="Oliynyk M."/>
            <person name="Samborskyy M."/>
            <person name="Lester J.B."/>
            <person name="Mironenko T."/>
            <person name="Scott N."/>
            <person name="Dickens S."/>
            <person name="Haydock S.F."/>
            <person name="Leadlay P.F."/>
        </authorList>
    </citation>
    <scope>NUCLEOTIDE SEQUENCE [LARGE SCALE GENOMIC DNA]</scope>
    <source>
        <strain>ATCC 11635 / DSM 40517 / JCM 4748 / NBRC 13426 / NCIMB 8594 / NRRL 2338</strain>
    </source>
</reference>
<name>ARC_SACEN</name>
<protein>
    <recommendedName>
        <fullName evidence="1">Proteasome-associated ATPase</fullName>
    </recommendedName>
    <alternativeName>
        <fullName evidence="1">AAA ATPase forming ring-shaped complexes</fullName>
        <shortName evidence="1">ARC</shortName>
    </alternativeName>
    <alternativeName>
        <fullName evidence="1">Proteasomal ATPase</fullName>
    </alternativeName>
</protein>
<evidence type="ECO:0000255" key="1">
    <source>
        <dbReference type="HAMAP-Rule" id="MF_02112"/>
    </source>
</evidence>
<evidence type="ECO:0000256" key="2">
    <source>
        <dbReference type="SAM" id="MobiDB-lite"/>
    </source>
</evidence>
<dbReference type="EMBL" id="AM420293">
    <property type="protein sequence ID" value="CAM01551.1"/>
    <property type="molecule type" value="Genomic_DNA"/>
</dbReference>
<dbReference type="RefSeq" id="WP_009945872.1">
    <property type="nucleotide sequence ID" value="NC_009142.1"/>
</dbReference>
<dbReference type="SMR" id="A4FBX6"/>
<dbReference type="STRING" id="405948.SACE_2246"/>
<dbReference type="KEGG" id="sen:SACE_2246"/>
<dbReference type="eggNOG" id="COG1222">
    <property type="taxonomic scope" value="Bacteria"/>
</dbReference>
<dbReference type="HOGENOM" id="CLU_036054_0_0_11"/>
<dbReference type="OrthoDB" id="9809379at2"/>
<dbReference type="UniPathway" id="UPA00997"/>
<dbReference type="Proteomes" id="UP000006728">
    <property type="component" value="Chromosome"/>
</dbReference>
<dbReference type="GO" id="GO:0000502">
    <property type="term" value="C:proteasome complex"/>
    <property type="evidence" value="ECO:0007669"/>
    <property type="project" value="UniProtKB-KW"/>
</dbReference>
<dbReference type="GO" id="GO:0005524">
    <property type="term" value="F:ATP binding"/>
    <property type="evidence" value="ECO:0007669"/>
    <property type="project" value="UniProtKB-UniRule"/>
</dbReference>
<dbReference type="GO" id="GO:0016887">
    <property type="term" value="F:ATP hydrolysis activity"/>
    <property type="evidence" value="ECO:0007669"/>
    <property type="project" value="UniProtKB-UniRule"/>
</dbReference>
<dbReference type="GO" id="GO:0019941">
    <property type="term" value="P:modification-dependent protein catabolic process"/>
    <property type="evidence" value="ECO:0007669"/>
    <property type="project" value="InterPro"/>
</dbReference>
<dbReference type="GO" id="GO:0010498">
    <property type="term" value="P:proteasomal protein catabolic process"/>
    <property type="evidence" value="ECO:0007669"/>
    <property type="project" value="InterPro"/>
</dbReference>
<dbReference type="FunFam" id="3.40.50.300:FF:000155">
    <property type="entry name" value="AAA ATPase forming ring-shaped complexes"/>
    <property type="match status" value="1"/>
</dbReference>
<dbReference type="Gene3D" id="1.10.8.60">
    <property type="match status" value="1"/>
</dbReference>
<dbReference type="Gene3D" id="1.20.5.170">
    <property type="match status" value="1"/>
</dbReference>
<dbReference type="Gene3D" id="2.40.50.140">
    <property type="entry name" value="Nucleic acid-binding proteins"/>
    <property type="match status" value="2"/>
</dbReference>
<dbReference type="Gene3D" id="3.40.50.300">
    <property type="entry name" value="P-loop containing nucleotide triphosphate hydrolases"/>
    <property type="match status" value="1"/>
</dbReference>
<dbReference type="HAMAP" id="MF_02112">
    <property type="entry name" value="ARC_ATPase"/>
    <property type="match status" value="1"/>
</dbReference>
<dbReference type="InterPro" id="IPR003593">
    <property type="entry name" value="AAA+_ATPase"/>
</dbReference>
<dbReference type="InterPro" id="IPR050168">
    <property type="entry name" value="AAA_ATPase_domain"/>
</dbReference>
<dbReference type="InterPro" id="IPR003959">
    <property type="entry name" value="ATPase_AAA_core"/>
</dbReference>
<dbReference type="InterPro" id="IPR003960">
    <property type="entry name" value="ATPase_AAA_CS"/>
</dbReference>
<dbReference type="InterPro" id="IPR012340">
    <property type="entry name" value="NA-bd_OB-fold"/>
</dbReference>
<dbReference type="InterPro" id="IPR027417">
    <property type="entry name" value="P-loop_NTPase"/>
</dbReference>
<dbReference type="InterPro" id="IPR032501">
    <property type="entry name" value="Prot_ATP_ID_OB_2nd"/>
</dbReference>
<dbReference type="InterPro" id="IPR041626">
    <property type="entry name" value="Prot_ATP_ID_OB_N"/>
</dbReference>
<dbReference type="InterPro" id="IPR022482">
    <property type="entry name" value="Proteasome_ATPase"/>
</dbReference>
<dbReference type="NCBIfam" id="TIGR03689">
    <property type="entry name" value="pup_AAA"/>
    <property type="match status" value="1"/>
</dbReference>
<dbReference type="PANTHER" id="PTHR23077">
    <property type="entry name" value="AAA-FAMILY ATPASE"/>
    <property type="match status" value="1"/>
</dbReference>
<dbReference type="PANTHER" id="PTHR23077:SF144">
    <property type="entry name" value="PROTEASOME-ASSOCIATED ATPASE"/>
    <property type="match status" value="1"/>
</dbReference>
<dbReference type="Pfam" id="PF00004">
    <property type="entry name" value="AAA"/>
    <property type="match status" value="1"/>
</dbReference>
<dbReference type="Pfam" id="PF16450">
    <property type="entry name" value="Prot_ATP_ID_OB_C"/>
    <property type="match status" value="1"/>
</dbReference>
<dbReference type="Pfam" id="PF17758">
    <property type="entry name" value="Prot_ATP_ID_OB_N"/>
    <property type="match status" value="1"/>
</dbReference>
<dbReference type="SMART" id="SM00382">
    <property type="entry name" value="AAA"/>
    <property type="match status" value="1"/>
</dbReference>
<dbReference type="SUPFAM" id="SSF52540">
    <property type="entry name" value="P-loop containing nucleoside triphosphate hydrolases"/>
    <property type="match status" value="1"/>
</dbReference>
<dbReference type="PROSITE" id="PS00674">
    <property type="entry name" value="AAA"/>
    <property type="match status" value="1"/>
</dbReference>
<sequence>MQHDRPGSRPEEGGEQQIGGDAELNSQIRLLEDEVALLRRKLNESPQQVRLLEKRLAEASERVSQLTERNAKLTETLKEARSQLMALREEVDRLAQPPSGYGVFLHAYEDSTVDVFTSGRKMRVSVSPNVATEDLRLGQSVRLNEALTVVEAGAFEQTGEVCTFRELLPVDAVTRSPRALVLGHTDEERVVWVTEPLAESGLKAGDSVLVDSKAGYAYDLVPKAEVEDLVLEEVPDVGYNDIGGLGNQIEQIRDAVELPFLHSDLYVEYQLRPPKGVLLYGPPGCGKTLIAKAVANSLAKKVAASRGDDDGQAKSYFLNIKGPELLNKFVGETERHIRLIFQRAREKASEGTPVIVFFDEMDSIFRTRGSGVSSDVETTIVPQLLSEIDGVEGLENVIVIGASNREDMIDPAILRPGRLDVKIKIERPDAESAKDIFSKYLTRQLPIHEEDLKEFGGDQASCVEAMIQTTVERMYAETDENRFLEVTYANGDKEVLYFKDFNSGAMIQNIVDRAKKAAIKAVLETGQPGLRVQHLQDAIIDEFAENEDLPNTTNPDDWARISGKKGERIVYIRTLVSGKNQESGRAIDTATNTGQYL</sequence>
<proteinExistence type="inferred from homology"/>
<feature type="chain" id="PRO_0000397017" description="Proteasome-associated ATPase">
    <location>
        <begin position="1"/>
        <end position="597"/>
    </location>
</feature>
<feature type="region of interest" description="Disordered" evidence="2">
    <location>
        <begin position="1"/>
        <end position="22"/>
    </location>
</feature>
<feature type="region of interest" description="Docks into pockets in the proteasome alpha-ring" evidence="1">
    <location>
        <begin position="596"/>
        <end position="597"/>
    </location>
</feature>
<feature type="coiled-coil region" evidence="1">
    <location>
        <begin position="21"/>
        <end position="97"/>
    </location>
</feature>
<feature type="compositionally biased region" description="Basic and acidic residues" evidence="2">
    <location>
        <begin position="1"/>
        <end position="12"/>
    </location>
</feature>
<feature type="binding site" evidence="1">
    <location>
        <begin position="284"/>
        <end position="289"/>
    </location>
    <ligand>
        <name>ATP</name>
        <dbReference type="ChEBI" id="CHEBI:30616"/>
    </ligand>
</feature>
<organism>
    <name type="scientific">Saccharopolyspora erythraea (strain ATCC 11635 / DSM 40517 / JCM 4748 / NBRC 13426 / NCIMB 8594 / NRRL 2338)</name>
    <dbReference type="NCBI Taxonomy" id="405948"/>
    <lineage>
        <taxon>Bacteria</taxon>
        <taxon>Bacillati</taxon>
        <taxon>Actinomycetota</taxon>
        <taxon>Actinomycetes</taxon>
        <taxon>Pseudonocardiales</taxon>
        <taxon>Pseudonocardiaceae</taxon>
        <taxon>Saccharopolyspora</taxon>
    </lineage>
</organism>
<gene>
    <name evidence="1" type="primary">arc</name>
    <name type="ordered locus">SACE_2246</name>
</gene>
<accession>A4FBX6</accession>
<keyword id="KW-0067">ATP-binding</keyword>
<keyword id="KW-0143">Chaperone</keyword>
<keyword id="KW-0175">Coiled coil</keyword>
<keyword id="KW-0547">Nucleotide-binding</keyword>
<keyword id="KW-0647">Proteasome</keyword>
<keyword id="KW-1185">Reference proteome</keyword>
<comment type="function">
    <text evidence="1">ATPase which is responsible for recognizing, binding, unfolding and translocation of pupylated proteins into the bacterial 20S proteasome core particle. May be essential for opening the gate of the 20S proteasome via an interaction with its C-terminus, thereby allowing substrate entry and access to the site of proteolysis. Thus, the C-termini of the proteasomal ATPase may function like a 'key in a lock' to induce gate opening and therefore regulate proteolysis.</text>
</comment>
<comment type="pathway">
    <text evidence="1">Protein degradation; proteasomal Pup-dependent pathway.</text>
</comment>
<comment type="subunit">
    <text evidence="1">Homohexamer. Assembles into a hexameric ring structure that caps the 20S proteasome core. Strongly interacts with the prokaryotic ubiquitin-like protein Pup through a hydrophobic interface; the interacting region of ARC lies in its N-terminal coiled-coil domain. There is one Pup binding site per ARC hexamer ring. Upon ATP-binding, the C-terminus of ARC interacts with the alpha-rings of the proteasome core, possibly by binding to the intersubunit pockets.</text>
</comment>
<comment type="domain">
    <text evidence="1">Consists of three main regions, an N-terminal coiled-coil domain that binds to protein Pup and functions as a docking station, an interdomain involved in ARC hexamerization, and a C-terminal ATPase domain of the AAA type.</text>
</comment>
<comment type="similarity">
    <text evidence="1">Belongs to the AAA ATPase family.</text>
</comment>